<keyword id="KW-0157">Chromophore</keyword>
<keyword id="KW-0600">Photoreceptor protein</keyword>
<keyword id="KW-0675">Receptor</keyword>
<keyword id="KW-0677">Repeat</keyword>
<keyword id="KW-0716">Sensory transduction</keyword>
<keyword id="KW-0804">Transcription</keyword>
<keyword id="KW-0805">Transcription regulation</keyword>
<reference key="1">
    <citation type="submission" date="1997-02" db="EMBL/GenBank/DDBJ databases">
        <authorList>
            <person name="Gutierrez-Marcos J.F."/>
            <person name="Vences-Benito F.J."/>
        </authorList>
    </citation>
    <scope>NUCLEOTIDE SEQUENCE [GENOMIC DNA]</scope>
    <source>
        <strain>cv. C-24</strain>
    </source>
</reference>
<comment type="function">
    <text>Regulatory photoreceptor which exists in two forms that are reversibly interconvertible by light: the Pr form that absorbs maximally in the red region of the spectrum and the Pfr form that absorbs maximally in the far-red region. Photoconversion of Pr to Pfr induces an array of morphogenic responses, whereas reconversion of Pfr to Pr cancels the induction of those responses. Pfr controls the expression of a number of nuclear genes including those encoding the small subunit of ribulose-bisphosphate carboxylase, chlorophyll A/B binding protein, protochlorophyllide reductase, rRNA, etc. It also controls the expression of its own gene(s) in a negative feedback fashion.</text>
</comment>
<comment type="subunit">
    <text evidence="1">Homodimer.</text>
</comment>
<comment type="PTM">
    <text evidence="1">Contains one covalently linked phytochromobilin chromophore.</text>
</comment>
<comment type="similarity">
    <text evidence="5">Belongs to the phytochrome family.</text>
</comment>
<accession>P93673</accession>
<sequence>MSTTRPSQSSNNSGRSRNSARIIAQTTVDAKLHATFEESGSSFDYSSWVRVSGSVDGDQQPRSNKVTTAYLNHIQRGKQIQPFGCLLALDEKTCKVVAYSENAPEMLTMVSHAVPSVGDHPALGIGTDIRTVFTAPSASALQKALGFAEVSLLNPILVHCKTSGKPFYAIIHRVTGSLIIDFEPVKPYEVPMTAAGALQSYKLAAKAITRLQSLASGSMERLCDTMVQEVFELTGYDRVMAYKFHEDDHGEVIAEIAKPGLEPYLGLHYPATDIPQAARFLFMKNKVRMIVDCNAKHVKVLQDEKLPFDLTLCGSTLRAPHSCHLQYMANMDSIASLVMAVVVNDSDEDGDSADAVLPQKKKRLWGLVVCHNTTPRFVPFPLRYACEFLAQVFAIHVNKEIELEYQILEKNILRTQTLLCDMLMRDAPLGIVSQSPNIMDLVKCDGAALFYRNKLWLLGATPTEYQIREIALWMSEYHTDSTGLSTDSLLDAGFPGALSLSDTVCGMAAVRITSKDIVFWFRSHTAAEIRWGGAKHEPGEQDDGRKMHPRSSFKAFLEVVKARSVPWKDFEMDAIHSLQLILRNASKDTDIIDLNTKAINTRLNDLKIEGMQELEAVTSEMVRLIETATVPILAVDVDGTVNGWNIKIAELTGLPVGEAIGKHLLTLVEDSSTDIVKKMLNLALQGEEEKNVQFEIKTHGDQVEFGPISLIVNACASRDLRENVVGVCFVAQDITAQKTVMDKFTRIEGDYKAIVQNPNQLIPPIFGTDEFGWCCEWNAAMIKLTGWKREEVMDKMLLGEVFGTQMSCCRLKNQEAFVNFGIVLNKAMTGLETEKVAFGFFSRKGKYVECLLSVSKKIDAEGLVTGVFCFLQLASPELQQALHIQRLSEQTALKRLKVLTYMKRQIRNPLAGIVFSSKMLEGTDLETEQKQIVNTSSQCQRQLSKILDDSDLDGIIDGYLDLEMAEFTLHEVLVTSLSQVMNRSNTKGIRIANDVAEHIAKESLYGDSLRLQQVLADFLLISINSTPNGGQVVIASSLTKEQLGKSVHLVNLELSITHGGSGVPEAALNQMFGNNVLESEEGISLHISRKLLKLMNGDVRYLKEAGKSSFILSVELAAAHKLKG</sequence>
<dbReference type="EMBL" id="U84970">
    <property type="protein sequence ID" value="AAB47994.1"/>
    <property type="molecule type" value="Genomic_DNA"/>
</dbReference>
<dbReference type="SMR" id="P93673"/>
<dbReference type="GO" id="GO:0000155">
    <property type="term" value="F:phosphorelay sensor kinase activity"/>
    <property type="evidence" value="ECO:0007669"/>
    <property type="project" value="InterPro"/>
</dbReference>
<dbReference type="GO" id="GO:0009881">
    <property type="term" value="F:photoreceptor activity"/>
    <property type="evidence" value="ECO:0007669"/>
    <property type="project" value="UniProtKB-KW"/>
</dbReference>
<dbReference type="GO" id="GO:0042803">
    <property type="term" value="F:protein homodimerization activity"/>
    <property type="evidence" value="ECO:0007669"/>
    <property type="project" value="InterPro"/>
</dbReference>
<dbReference type="GO" id="GO:0009584">
    <property type="term" value="P:detection of visible light"/>
    <property type="evidence" value="ECO:0007669"/>
    <property type="project" value="InterPro"/>
</dbReference>
<dbReference type="GO" id="GO:0009585">
    <property type="term" value="P:red, far-red light phototransduction"/>
    <property type="evidence" value="ECO:0007669"/>
    <property type="project" value="InterPro"/>
</dbReference>
<dbReference type="GO" id="GO:0006355">
    <property type="term" value="P:regulation of DNA-templated transcription"/>
    <property type="evidence" value="ECO:0007669"/>
    <property type="project" value="InterPro"/>
</dbReference>
<dbReference type="CDD" id="cd00082">
    <property type="entry name" value="HisKA"/>
    <property type="match status" value="1"/>
</dbReference>
<dbReference type="CDD" id="cd00130">
    <property type="entry name" value="PAS"/>
    <property type="match status" value="2"/>
</dbReference>
<dbReference type="FunFam" id="3.30.450.20:FF:000039">
    <property type="entry name" value="Phytochrome"/>
    <property type="match status" value="1"/>
</dbReference>
<dbReference type="FunFam" id="3.30.450.270:FF:000001">
    <property type="entry name" value="Phytochrome"/>
    <property type="match status" value="1"/>
</dbReference>
<dbReference type="Gene3D" id="1.10.287.130">
    <property type="match status" value="1"/>
</dbReference>
<dbReference type="Gene3D" id="3.30.450.270">
    <property type="match status" value="1"/>
</dbReference>
<dbReference type="Gene3D" id="3.30.450.40">
    <property type="match status" value="1"/>
</dbReference>
<dbReference type="Gene3D" id="3.30.565.10">
    <property type="entry name" value="Histidine kinase-like ATPase, C-terminal domain"/>
    <property type="match status" value="1"/>
</dbReference>
<dbReference type="Gene3D" id="3.30.450.20">
    <property type="entry name" value="PAS domain"/>
    <property type="match status" value="3"/>
</dbReference>
<dbReference type="InterPro" id="IPR003018">
    <property type="entry name" value="GAF"/>
</dbReference>
<dbReference type="InterPro" id="IPR029016">
    <property type="entry name" value="GAF-like_dom_sf"/>
</dbReference>
<dbReference type="InterPro" id="IPR036890">
    <property type="entry name" value="HATPase_C_sf"/>
</dbReference>
<dbReference type="InterPro" id="IPR005467">
    <property type="entry name" value="His_kinase_dom"/>
</dbReference>
<dbReference type="InterPro" id="IPR003661">
    <property type="entry name" value="HisK_dim/P_dom"/>
</dbReference>
<dbReference type="InterPro" id="IPR000014">
    <property type="entry name" value="PAS"/>
</dbReference>
<dbReference type="InterPro" id="IPR035965">
    <property type="entry name" value="PAS-like_dom_sf"/>
</dbReference>
<dbReference type="InterPro" id="IPR013654">
    <property type="entry name" value="PAS_2"/>
</dbReference>
<dbReference type="InterPro" id="IPR013767">
    <property type="entry name" value="PAS_fold"/>
</dbReference>
<dbReference type="InterPro" id="IPR016132">
    <property type="entry name" value="Phyto_chromo_attachment"/>
</dbReference>
<dbReference type="InterPro" id="IPR013516">
    <property type="entry name" value="Phyto_chromo_BS"/>
</dbReference>
<dbReference type="InterPro" id="IPR001294">
    <property type="entry name" value="Phytochrome"/>
</dbReference>
<dbReference type="InterPro" id="IPR012129">
    <property type="entry name" value="Phytochrome_A-E"/>
</dbReference>
<dbReference type="InterPro" id="IPR013515">
    <property type="entry name" value="Phytochrome_cen-reg"/>
</dbReference>
<dbReference type="InterPro" id="IPR043150">
    <property type="entry name" value="Phytochrome_PHY_sf"/>
</dbReference>
<dbReference type="NCBIfam" id="TIGR00229">
    <property type="entry name" value="sensory_box"/>
    <property type="match status" value="1"/>
</dbReference>
<dbReference type="PANTHER" id="PTHR47876">
    <property type="entry name" value="OS08G0260000 PROTEIN"/>
    <property type="match status" value="1"/>
</dbReference>
<dbReference type="PANTHER" id="PTHR47876:SF3">
    <property type="entry name" value="PHYTOCHROME 1"/>
    <property type="match status" value="1"/>
</dbReference>
<dbReference type="Pfam" id="PF01590">
    <property type="entry name" value="GAF"/>
    <property type="match status" value="1"/>
</dbReference>
<dbReference type="Pfam" id="PF02518">
    <property type="entry name" value="HATPase_c"/>
    <property type="match status" value="1"/>
</dbReference>
<dbReference type="Pfam" id="PF00512">
    <property type="entry name" value="HisKA"/>
    <property type="match status" value="1"/>
</dbReference>
<dbReference type="Pfam" id="PF00989">
    <property type="entry name" value="PAS"/>
    <property type="match status" value="2"/>
</dbReference>
<dbReference type="Pfam" id="PF08446">
    <property type="entry name" value="PAS_2"/>
    <property type="match status" value="1"/>
</dbReference>
<dbReference type="Pfam" id="PF00360">
    <property type="entry name" value="PHY"/>
    <property type="match status" value="1"/>
</dbReference>
<dbReference type="PIRSF" id="PIRSF000084">
    <property type="entry name" value="Phytochrome"/>
    <property type="match status" value="1"/>
</dbReference>
<dbReference type="PRINTS" id="PR01033">
    <property type="entry name" value="PHYTOCHROME"/>
</dbReference>
<dbReference type="SMART" id="SM00065">
    <property type="entry name" value="GAF"/>
    <property type="match status" value="1"/>
</dbReference>
<dbReference type="SMART" id="SM00387">
    <property type="entry name" value="HATPase_c"/>
    <property type="match status" value="1"/>
</dbReference>
<dbReference type="SMART" id="SM00388">
    <property type="entry name" value="HisKA"/>
    <property type="match status" value="1"/>
</dbReference>
<dbReference type="SMART" id="SM00091">
    <property type="entry name" value="PAS"/>
    <property type="match status" value="2"/>
</dbReference>
<dbReference type="SUPFAM" id="SSF55874">
    <property type="entry name" value="ATPase domain of HSP90 chaperone/DNA topoisomerase II/histidine kinase"/>
    <property type="match status" value="1"/>
</dbReference>
<dbReference type="SUPFAM" id="SSF55781">
    <property type="entry name" value="GAF domain-like"/>
    <property type="match status" value="2"/>
</dbReference>
<dbReference type="SUPFAM" id="SSF55785">
    <property type="entry name" value="PYP-like sensor domain (PAS domain)"/>
    <property type="match status" value="3"/>
</dbReference>
<dbReference type="PROSITE" id="PS50109">
    <property type="entry name" value="HIS_KIN"/>
    <property type="match status" value="1"/>
</dbReference>
<dbReference type="PROSITE" id="PS50112">
    <property type="entry name" value="PAS"/>
    <property type="match status" value="2"/>
</dbReference>
<dbReference type="PROSITE" id="PS00245">
    <property type="entry name" value="PHYTOCHROME_1"/>
    <property type="match status" value="1"/>
</dbReference>
<dbReference type="PROSITE" id="PS50046">
    <property type="entry name" value="PHYTOCHROME_2"/>
    <property type="match status" value="1"/>
</dbReference>
<evidence type="ECO:0000250" key="1"/>
<evidence type="ECO:0000255" key="2">
    <source>
        <dbReference type="PROSITE-ProRule" id="PRU00107"/>
    </source>
</evidence>
<evidence type="ECO:0000255" key="3">
    <source>
        <dbReference type="PROSITE-ProRule" id="PRU00140"/>
    </source>
</evidence>
<evidence type="ECO:0000256" key="4">
    <source>
        <dbReference type="SAM" id="MobiDB-lite"/>
    </source>
</evidence>
<evidence type="ECO:0000305" key="5"/>
<feature type="chain" id="PRO_0000171973" description="Phytochrome type A">
    <location>
        <begin position="1"/>
        <end position="1124"/>
    </location>
</feature>
<feature type="domain" description="GAF">
    <location>
        <begin position="218"/>
        <end position="401"/>
    </location>
</feature>
<feature type="domain" description="PAS 1" evidence="3">
    <location>
        <begin position="617"/>
        <end position="687"/>
    </location>
</feature>
<feature type="domain" description="PAS 2" evidence="3">
    <location>
        <begin position="750"/>
        <end position="821"/>
    </location>
</feature>
<feature type="domain" description="Histidine kinase" evidence="2">
    <location>
        <begin position="901"/>
        <end position="1120"/>
    </location>
</feature>
<feature type="region of interest" description="Disordered" evidence="4">
    <location>
        <begin position="1"/>
        <end position="21"/>
    </location>
</feature>
<feature type="compositionally biased region" description="Low complexity" evidence="4">
    <location>
        <begin position="1"/>
        <end position="19"/>
    </location>
</feature>
<feature type="binding site" description="covalent" evidence="1">
    <location>
        <position position="323"/>
    </location>
    <ligand>
        <name>phytochromobilin</name>
        <dbReference type="ChEBI" id="CHEBI:189064"/>
    </ligand>
</feature>
<organism>
    <name type="scientific">Lathyrus sativus</name>
    <name type="common">White vetchling</name>
    <dbReference type="NCBI Taxonomy" id="3860"/>
    <lineage>
        <taxon>Eukaryota</taxon>
        <taxon>Viridiplantae</taxon>
        <taxon>Streptophyta</taxon>
        <taxon>Embryophyta</taxon>
        <taxon>Tracheophyta</taxon>
        <taxon>Spermatophyta</taxon>
        <taxon>Magnoliopsida</taxon>
        <taxon>eudicotyledons</taxon>
        <taxon>Gunneridae</taxon>
        <taxon>Pentapetalae</taxon>
        <taxon>rosids</taxon>
        <taxon>fabids</taxon>
        <taxon>Fabales</taxon>
        <taxon>Fabaceae</taxon>
        <taxon>Papilionoideae</taxon>
        <taxon>50 kb inversion clade</taxon>
        <taxon>NPAAA clade</taxon>
        <taxon>Hologalegina</taxon>
        <taxon>IRL clade</taxon>
        <taxon>Fabeae</taxon>
        <taxon>Lathyrus</taxon>
    </lineage>
</organism>
<name>PHYA_LATSA</name>
<proteinExistence type="inferred from homology"/>
<protein>
    <recommendedName>
        <fullName>Phytochrome type A</fullName>
    </recommendedName>
</protein>
<gene>
    <name type="primary">PHYA</name>
</gene>